<feature type="initiator methionine" description="Removed" evidence="1">
    <location>
        <position position="1"/>
    </location>
</feature>
<feature type="chain" id="PRO_0000066370" description="Outer membrane protein YopN">
    <location>
        <begin position="2"/>
        <end position="293"/>
    </location>
</feature>
<organism>
    <name type="scientific">Yersinia enterocolitica</name>
    <dbReference type="NCBI Taxonomy" id="630"/>
    <lineage>
        <taxon>Bacteria</taxon>
        <taxon>Pseudomonadati</taxon>
        <taxon>Pseudomonadota</taxon>
        <taxon>Gammaproteobacteria</taxon>
        <taxon>Enterobacterales</taxon>
        <taxon>Yersiniaceae</taxon>
        <taxon>Yersinia</taxon>
    </lineage>
</organism>
<protein>
    <recommendedName>
        <fullName>Outer membrane protein YopN</fullName>
    </recommendedName>
    <alternativeName>
        <fullName>LcrE</fullName>
    </alternativeName>
    <alternativeName>
        <fullName>Yop4b</fullName>
    </alternativeName>
</protein>
<geneLocation type="plasmid">
    <name>pYV</name>
</geneLocation>
<evidence type="ECO:0000250" key="1"/>
<evidence type="ECO:0000305" key="2"/>
<accession>P16945</accession>
<sequence length="293" mass="32924">MTTLHNLSYGNTPLRNEHPEIASSQIVNQTLGQFRGESVQIVSGTLQSIADMAEEVTFVFSERKELSLDKRKLSDSQARVSDVEEQVNQYLSKVPELKQKQNVSELLSLLSNSPNISLSQLKAYLEGKSEEPSEQFKMLCGLRDALKGRPELAHLLHLVEQALVSMVEEQEEAIVLGARITPEAYRESQSGVNPLQPLRDTYRDAVMGYQGINAIWSDLQKRFPNGDIDSVILFLQKALSADLQSQQSGSEREKLEIVISDLQKLKEFRSVSDQVKGFWQLFSEGITNGLRPF</sequence>
<keyword id="KW-0106">Calcium</keyword>
<keyword id="KW-0998">Cell outer membrane</keyword>
<keyword id="KW-0472">Membrane</keyword>
<keyword id="KW-0614">Plasmid</keyword>
<keyword id="KW-0843">Virulence</keyword>
<name>YOPN_YEREN</name>
<proteinExistence type="evidence at transcript level"/>
<reference key="1">
    <citation type="journal article" date="1990" name="J. Bacteriol.">
        <title>The lcrE gene is part of an operon in the lcr region of Yersinia enterocolitica O:3.</title>
        <authorList>
            <person name="Viitanen A.-M."/>
            <person name="Toivanen P."/>
            <person name="Skurnik M."/>
        </authorList>
    </citation>
    <scope>NUCLEOTIDE SEQUENCE [GENOMIC DNA]</scope>
    <source>
        <strain>Serotype O:3</strain>
    </source>
</reference>
<dbReference type="EMBL" id="M32097">
    <property type="protein sequence ID" value="AAA98429.1"/>
    <property type="molecule type" value="Genomic_DNA"/>
</dbReference>
<dbReference type="PIR" id="A35392">
    <property type="entry name" value="A35392"/>
</dbReference>
<dbReference type="RefSeq" id="WP_014609482.1">
    <property type="nucleotide sequence ID" value="NZ_JBGEVU010000058.1"/>
</dbReference>
<dbReference type="SMR" id="P16945"/>
<dbReference type="GeneID" id="31412299"/>
<dbReference type="GO" id="GO:0009279">
    <property type="term" value="C:cell outer membrane"/>
    <property type="evidence" value="ECO:0007669"/>
    <property type="project" value="UniProtKB-SubCell"/>
</dbReference>
<dbReference type="GO" id="GO:0009986">
    <property type="term" value="C:cell surface"/>
    <property type="evidence" value="ECO:0007669"/>
    <property type="project" value="InterPro"/>
</dbReference>
<dbReference type="GO" id="GO:0050709">
    <property type="term" value="P:negative regulation of protein secretion"/>
    <property type="evidence" value="ECO:0007669"/>
    <property type="project" value="InterPro"/>
</dbReference>
<dbReference type="GO" id="GO:0030254">
    <property type="term" value="P:protein secretion by the type III secretion system"/>
    <property type="evidence" value="ECO:0007669"/>
    <property type="project" value="InterPro"/>
</dbReference>
<dbReference type="Gene3D" id="1.10.150.630">
    <property type="match status" value="1"/>
</dbReference>
<dbReference type="Gene3D" id="6.10.250.670">
    <property type="match status" value="1"/>
</dbReference>
<dbReference type="InterPro" id="IPR010812">
    <property type="entry name" value="HrpJ-like"/>
</dbReference>
<dbReference type="InterPro" id="IPR013401">
    <property type="entry name" value="T3SS_LcrE"/>
</dbReference>
<dbReference type="NCBIfam" id="TIGR02568">
    <property type="entry name" value="LcrE"/>
    <property type="match status" value="1"/>
</dbReference>
<dbReference type="Pfam" id="PF07201">
    <property type="entry name" value="HrpJ"/>
    <property type="match status" value="1"/>
</dbReference>
<dbReference type="SUPFAM" id="SSF140591">
    <property type="entry name" value="Type III secretion system domain"/>
    <property type="match status" value="1"/>
</dbReference>
<comment type="function">
    <text>Plays a major role in regulation of the low-calcium response. Seems to sense the calcium concentration and to transmit a signal to shut off yop transcription when the calcium concentration is high.</text>
</comment>
<comment type="subcellular location">
    <subcellularLocation>
        <location>Cell outer membrane</location>
    </subcellularLocation>
</comment>
<comment type="induction">
    <text>Temperature seems to play the major role in regulation of transcription of the yopN-containing operon of pYV, whereas Ca(2+) concentration has only a moderate effect at 37 degrees C., and no effect at room temperature.</text>
</comment>
<comment type="similarity">
    <text evidence="2">Belongs to the HrpJ/YopN family.</text>
</comment>
<gene>
    <name type="primary">yopN</name>
    <name type="synonym">lcrE</name>
</gene>